<accession>A7GYD5</accession>
<comment type="function">
    <text evidence="1">Catalyzes the base-exchange of a guanine (G) residue with the queuine precursor 7-aminomethyl-7-deazaguanine (PreQ1) at position 34 (anticodon wobble position) in tRNAs with GU(N) anticodons (tRNA-Asp, -Asn, -His and -Tyr). Catalysis occurs through a double-displacement mechanism. The nucleophile active site attacks the C1' of nucleotide 34 to detach the guanine base from the RNA, forming a covalent enzyme-RNA intermediate. The proton acceptor active site deprotonates the incoming PreQ1, allowing a nucleophilic attack on the C1' of the ribose to form the product. After dissociation, two additional enzymatic reactions on the tRNA convert PreQ1 to queuine (Q), resulting in the hypermodified nucleoside queuosine (7-(((4,5-cis-dihydroxy-2-cyclopenten-1-yl)amino)methyl)-7-deazaguanosine).</text>
</comment>
<comment type="catalytic activity">
    <reaction evidence="1">
        <text>7-aminomethyl-7-carbaguanine + guanosine(34) in tRNA = 7-aminomethyl-7-carbaguanosine(34) in tRNA + guanine</text>
        <dbReference type="Rhea" id="RHEA:24104"/>
        <dbReference type="Rhea" id="RHEA-COMP:10341"/>
        <dbReference type="Rhea" id="RHEA-COMP:10342"/>
        <dbReference type="ChEBI" id="CHEBI:16235"/>
        <dbReference type="ChEBI" id="CHEBI:58703"/>
        <dbReference type="ChEBI" id="CHEBI:74269"/>
        <dbReference type="ChEBI" id="CHEBI:82833"/>
        <dbReference type="EC" id="2.4.2.29"/>
    </reaction>
</comment>
<comment type="cofactor">
    <cofactor evidence="1">
        <name>Zn(2+)</name>
        <dbReference type="ChEBI" id="CHEBI:29105"/>
    </cofactor>
    <text evidence="1">Binds 1 zinc ion per subunit.</text>
</comment>
<comment type="pathway">
    <text evidence="1">tRNA modification; tRNA-queuosine biosynthesis.</text>
</comment>
<comment type="subunit">
    <text evidence="1">Homodimer. Within each dimer, one monomer is responsible for RNA recognition and catalysis, while the other monomer binds to the replacement base PreQ1.</text>
</comment>
<comment type="similarity">
    <text evidence="1">Belongs to the queuine tRNA-ribosyltransferase family.</text>
</comment>
<protein>
    <recommendedName>
        <fullName evidence="1">Queuine tRNA-ribosyltransferase</fullName>
        <ecNumber evidence="1">2.4.2.29</ecNumber>
    </recommendedName>
    <alternativeName>
        <fullName evidence="1">Guanine insertion enzyme</fullName>
    </alternativeName>
    <alternativeName>
        <fullName evidence="1">tRNA-guanine transglycosylase</fullName>
    </alternativeName>
</protein>
<keyword id="KW-0328">Glycosyltransferase</keyword>
<keyword id="KW-0479">Metal-binding</keyword>
<keyword id="KW-0671">Queuosine biosynthesis</keyword>
<keyword id="KW-1185">Reference proteome</keyword>
<keyword id="KW-0808">Transferase</keyword>
<keyword id="KW-0819">tRNA processing</keyword>
<keyword id="KW-0862">Zinc</keyword>
<feature type="chain" id="PRO_1000016768" description="Queuine tRNA-ribosyltransferase">
    <location>
        <begin position="1"/>
        <end position="388"/>
    </location>
</feature>
<feature type="region of interest" description="RNA binding" evidence="1">
    <location>
        <begin position="263"/>
        <end position="269"/>
    </location>
</feature>
<feature type="region of interest" description="RNA binding; important for wobble base 34 recognition" evidence="1">
    <location>
        <begin position="287"/>
        <end position="291"/>
    </location>
</feature>
<feature type="active site" description="Proton acceptor" evidence="1">
    <location>
        <position position="90"/>
    </location>
</feature>
<feature type="active site" description="Nucleophile" evidence="1">
    <location>
        <position position="282"/>
    </location>
</feature>
<feature type="binding site" evidence="1">
    <location>
        <begin position="90"/>
        <end position="94"/>
    </location>
    <ligand>
        <name>substrate</name>
    </ligand>
</feature>
<feature type="binding site" evidence="1">
    <location>
        <position position="144"/>
    </location>
    <ligand>
        <name>substrate</name>
    </ligand>
</feature>
<feature type="binding site" evidence="1">
    <location>
        <position position="205"/>
    </location>
    <ligand>
        <name>substrate</name>
    </ligand>
</feature>
<feature type="binding site" evidence="1">
    <location>
        <position position="232"/>
    </location>
    <ligand>
        <name>substrate</name>
    </ligand>
</feature>
<feature type="binding site" evidence="1">
    <location>
        <position position="320"/>
    </location>
    <ligand>
        <name>Zn(2+)</name>
        <dbReference type="ChEBI" id="CHEBI:29105"/>
    </ligand>
</feature>
<feature type="binding site" evidence="1">
    <location>
        <position position="322"/>
    </location>
    <ligand>
        <name>Zn(2+)</name>
        <dbReference type="ChEBI" id="CHEBI:29105"/>
    </ligand>
</feature>
<feature type="binding site" evidence="1">
    <location>
        <position position="325"/>
    </location>
    <ligand>
        <name>Zn(2+)</name>
        <dbReference type="ChEBI" id="CHEBI:29105"/>
    </ligand>
</feature>
<feature type="binding site" evidence="1">
    <location>
        <position position="351"/>
    </location>
    <ligand>
        <name>Zn(2+)</name>
        <dbReference type="ChEBI" id="CHEBI:29105"/>
    </ligand>
</feature>
<sequence>MKFEVLKTDGNARAGVLTTAHSVIQTPIFMPVGTVGAVKSLDATDMREILDAKIILANTYHMYLRPGSRVVAEFGGLHGFCKFNRSFLTDSGGFQAFSLRANTKNDEGGIKFKSHIDGSIHYFTPRSVLDTQYELDSDIMMILDDLVELPRDPHALGADEKARLKKRIDLSVTRTIKWAREAIDYHKFKQSQGAGLDQNIFGIIQGGTDYDARKICAQALCEMPFDGLAIGGLSVGEANEHMYETVEAVMPFIDAARPRYLMGVGTPEDIVENVQRGVDMFDCVMPTRNARNGTLFTSFGKIAIKNARFVNDHEPIDPECECYTCRRYSRGYLNHLFRAHELTFFRLASLHNLHYYLNLMKQIREAITAGKFSEFKREFYAKRSGGEI</sequence>
<dbReference type="EC" id="2.4.2.29" evidence="1"/>
<dbReference type="EMBL" id="CP000767">
    <property type="protein sequence ID" value="EAT99530.1"/>
    <property type="molecule type" value="Genomic_DNA"/>
</dbReference>
<dbReference type="RefSeq" id="WP_011992271.1">
    <property type="nucleotide sequence ID" value="NC_009715.2"/>
</dbReference>
<dbReference type="SMR" id="A7GYD5"/>
<dbReference type="STRING" id="360105.CCV52592_1432"/>
<dbReference type="KEGG" id="ccv:CCV52592_1432"/>
<dbReference type="HOGENOM" id="CLU_022060_0_1_7"/>
<dbReference type="OrthoDB" id="9805417at2"/>
<dbReference type="UniPathway" id="UPA00392"/>
<dbReference type="Proteomes" id="UP000006380">
    <property type="component" value="Chromosome"/>
</dbReference>
<dbReference type="GO" id="GO:0005829">
    <property type="term" value="C:cytosol"/>
    <property type="evidence" value="ECO:0007669"/>
    <property type="project" value="TreeGrafter"/>
</dbReference>
<dbReference type="GO" id="GO:0046872">
    <property type="term" value="F:metal ion binding"/>
    <property type="evidence" value="ECO:0007669"/>
    <property type="project" value="UniProtKB-KW"/>
</dbReference>
<dbReference type="GO" id="GO:0008479">
    <property type="term" value="F:tRNA-guanosine(34) queuine transglycosylase activity"/>
    <property type="evidence" value="ECO:0007669"/>
    <property type="project" value="UniProtKB-UniRule"/>
</dbReference>
<dbReference type="GO" id="GO:0008616">
    <property type="term" value="P:queuosine biosynthetic process"/>
    <property type="evidence" value="ECO:0007669"/>
    <property type="project" value="UniProtKB-UniRule"/>
</dbReference>
<dbReference type="GO" id="GO:0002099">
    <property type="term" value="P:tRNA wobble guanine modification"/>
    <property type="evidence" value="ECO:0007669"/>
    <property type="project" value="TreeGrafter"/>
</dbReference>
<dbReference type="GO" id="GO:0101030">
    <property type="term" value="P:tRNA-guanine transglycosylation"/>
    <property type="evidence" value="ECO:0007669"/>
    <property type="project" value="InterPro"/>
</dbReference>
<dbReference type="Gene3D" id="3.20.20.105">
    <property type="entry name" value="Queuine tRNA-ribosyltransferase-like"/>
    <property type="match status" value="1"/>
</dbReference>
<dbReference type="HAMAP" id="MF_00168">
    <property type="entry name" value="Q_tRNA_Tgt"/>
    <property type="match status" value="1"/>
</dbReference>
<dbReference type="InterPro" id="IPR050076">
    <property type="entry name" value="ArchSynthase1/Queuine_TRR"/>
</dbReference>
<dbReference type="InterPro" id="IPR004803">
    <property type="entry name" value="TGT"/>
</dbReference>
<dbReference type="InterPro" id="IPR036511">
    <property type="entry name" value="TGT-like_sf"/>
</dbReference>
<dbReference type="InterPro" id="IPR002616">
    <property type="entry name" value="tRNA_ribo_trans-like"/>
</dbReference>
<dbReference type="NCBIfam" id="TIGR00430">
    <property type="entry name" value="Q_tRNA_tgt"/>
    <property type="match status" value="1"/>
</dbReference>
<dbReference type="NCBIfam" id="TIGR00449">
    <property type="entry name" value="tgt_general"/>
    <property type="match status" value="1"/>
</dbReference>
<dbReference type="PANTHER" id="PTHR46499">
    <property type="entry name" value="QUEUINE TRNA-RIBOSYLTRANSFERASE"/>
    <property type="match status" value="1"/>
</dbReference>
<dbReference type="PANTHER" id="PTHR46499:SF1">
    <property type="entry name" value="QUEUINE TRNA-RIBOSYLTRANSFERASE"/>
    <property type="match status" value="1"/>
</dbReference>
<dbReference type="Pfam" id="PF01702">
    <property type="entry name" value="TGT"/>
    <property type="match status" value="1"/>
</dbReference>
<dbReference type="SUPFAM" id="SSF51713">
    <property type="entry name" value="tRNA-guanine transglycosylase"/>
    <property type="match status" value="1"/>
</dbReference>
<reference key="1">
    <citation type="submission" date="2007-07" db="EMBL/GenBank/DDBJ databases">
        <title>Genome sequence of Campylobacter curvus 525.92 isolated from human feces.</title>
        <authorList>
            <person name="Fouts D.E."/>
            <person name="Mongodin E.F."/>
            <person name="Puiu D."/>
            <person name="Sebastian Y."/>
            <person name="Miller W.G."/>
            <person name="Mandrell R.E."/>
            <person name="Lastovica A.J."/>
            <person name="Nelson K.E."/>
        </authorList>
    </citation>
    <scope>NUCLEOTIDE SEQUENCE [LARGE SCALE GENOMIC DNA]</scope>
    <source>
        <strain>525.92</strain>
    </source>
</reference>
<proteinExistence type="inferred from homology"/>
<name>TGT_CAMC5</name>
<organism>
    <name type="scientific">Campylobacter curvus (strain 525.92)</name>
    <dbReference type="NCBI Taxonomy" id="360105"/>
    <lineage>
        <taxon>Bacteria</taxon>
        <taxon>Pseudomonadati</taxon>
        <taxon>Campylobacterota</taxon>
        <taxon>Epsilonproteobacteria</taxon>
        <taxon>Campylobacterales</taxon>
        <taxon>Campylobacteraceae</taxon>
        <taxon>Campylobacter</taxon>
    </lineage>
</organism>
<gene>
    <name evidence="1" type="primary">tgt</name>
    <name type="ordered locus">Ccur92_09230</name>
    <name type="ORF">CCV52592_1432</name>
</gene>
<evidence type="ECO:0000255" key="1">
    <source>
        <dbReference type="HAMAP-Rule" id="MF_00168"/>
    </source>
</evidence>